<comment type="function">
    <text evidence="1">Catalyzes the complicated ring closure reaction between the two acyclic compounds 1-deoxy-D-xylulose-5-phosphate (DXP) and 3-amino-2-oxopropyl phosphate (1-amino-acetone-3-phosphate or AAP) to form pyridoxine 5'-phosphate (PNP) and inorganic phosphate.</text>
</comment>
<comment type="catalytic activity">
    <reaction evidence="1">
        <text>3-amino-2-oxopropyl phosphate + 1-deoxy-D-xylulose 5-phosphate = pyridoxine 5'-phosphate + phosphate + 2 H2O + H(+)</text>
        <dbReference type="Rhea" id="RHEA:15265"/>
        <dbReference type="ChEBI" id="CHEBI:15377"/>
        <dbReference type="ChEBI" id="CHEBI:15378"/>
        <dbReference type="ChEBI" id="CHEBI:43474"/>
        <dbReference type="ChEBI" id="CHEBI:57279"/>
        <dbReference type="ChEBI" id="CHEBI:57792"/>
        <dbReference type="ChEBI" id="CHEBI:58589"/>
        <dbReference type="EC" id="2.6.99.2"/>
    </reaction>
</comment>
<comment type="pathway">
    <text evidence="1">Cofactor biosynthesis; pyridoxine 5'-phosphate biosynthesis; pyridoxine 5'-phosphate from D-erythrose 4-phosphate: step 5/5.</text>
</comment>
<comment type="subunit">
    <text evidence="1">Homooctamer; tetramer of dimers.</text>
</comment>
<comment type="subcellular location">
    <subcellularLocation>
        <location evidence="1">Cytoplasm</location>
    </subcellularLocation>
</comment>
<comment type="similarity">
    <text evidence="1">Belongs to the PNP synthase family.</text>
</comment>
<feature type="chain" id="PRO_1000078821" description="Pyridoxine 5'-phosphate synthase">
    <location>
        <begin position="1"/>
        <end position="235"/>
    </location>
</feature>
<feature type="active site" description="Proton acceptor" evidence="1">
    <location>
        <position position="42"/>
    </location>
</feature>
<feature type="active site" description="Proton acceptor" evidence="1">
    <location>
        <position position="69"/>
    </location>
</feature>
<feature type="active site" description="Proton donor" evidence="1">
    <location>
        <position position="189"/>
    </location>
</feature>
<feature type="binding site" evidence="1">
    <location>
        <position position="6"/>
    </location>
    <ligand>
        <name>3-amino-2-oxopropyl phosphate</name>
        <dbReference type="ChEBI" id="CHEBI:57279"/>
    </ligand>
</feature>
<feature type="binding site" evidence="1">
    <location>
        <begin position="8"/>
        <end position="9"/>
    </location>
    <ligand>
        <name>1-deoxy-D-xylulose 5-phosphate</name>
        <dbReference type="ChEBI" id="CHEBI:57792"/>
    </ligand>
</feature>
<feature type="binding site" evidence="1">
    <location>
        <position position="17"/>
    </location>
    <ligand>
        <name>3-amino-2-oxopropyl phosphate</name>
        <dbReference type="ChEBI" id="CHEBI:57279"/>
    </ligand>
</feature>
<feature type="binding site" evidence="1">
    <location>
        <position position="44"/>
    </location>
    <ligand>
        <name>1-deoxy-D-xylulose 5-phosphate</name>
        <dbReference type="ChEBI" id="CHEBI:57792"/>
    </ligand>
</feature>
<feature type="binding site" evidence="1">
    <location>
        <position position="49"/>
    </location>
    <ligand>
        <name>1-deoxy-D-xylulose 5-phosphate</name>
        <dbReference type="ChEBI" id="CHEBI:57792"/>
    </ligand>
</feature>
<feature type="binding site" evidence="1">
    <location>
        <position position="99"/>
    </location>
    <ligand>
        <name>1-deoxy-D-xylulose 5-phosphate</name>
        <dbReference type="ChEBI" id="CHEBI:57792"/>
    </ligand>
</feature>
<feature type="binding site" evidence="1">
    <location>
        <position position="190"/>
    </location>
    <ligand>
        <name>3-amino-2-oxopropyl phosphate</name>
        <dbReference type="ChEBI" id="CHEBI:57279"/>
    </ligand>
</feature>
<feature type="binding site" evidence="1">
    <location>
        <begin position="211"/>
        <end position="212"/>
    </location>
    <ligand>
        <name>3-amino-2-oxopropyl phosphate</name>
        <dbReference type="ChEBI" id="CHEBI:57279"/>
    </ligand>
</feature>
<feature type="site" description="Transition state stabilizer" evidence="1">
    <location>
        <position position="150"/>
    </location>
</feature>
<proteinExistence type="inferred from homology"/>
<name>PDXJ_CHLPM</name>
<reference key="1">
    <citation type="submission" date="2007-03" db="EMBL/GenBank/DDBJ databases">
        <title>Complete sequence of Prosthecochloris vibrioformis DSM 265.</title>
        <authorList>
            <consortium name="US DOE Joint Genome Institute"/>
            <person name="Copeland A."/>
            <person name="Lucas S."/>
            <person name="Lapidus A."/>
            <person name="Barry K."/>
            <person name="Detter J.C."/>
            <person name="Glavina del Rio T."/>
            <person name="Hammon N."/>
            <person name="Israni S."/>
            <person name="Pitluck S."/>
            <person name="Schmutz J."/>
            <person name="Larimer F."/>
            <person name="Land M."/>
            <person name="Hauser L."/>
            <person name="Mikhailova N."/>
            <person name="Li T."/>
            <person name="Overmann J."/>
            <person name="Schuster S.C."/>
            <person name="Bryant D.A."/>
            <person name="Richardson P."/>
        </authorList>
    </citation>
    <scope>NUCLEOTIDE SEQUENCE [LARGE SCALE GENOMIC DNA]</scope>
    <source>
        <strain>DSM 265 / 1930</strain>
    </source>
</reference>
<dbReference type="EC" id="2.6.99.2" evidence="1"/>
<dbReference type="EMBL" id="CP000607">
    <property type="protein sequence ID" value="ABP36516.1"/>
    <property type="molecule type" value="Genomic_DNA"/>
</dbReference>
<dbReference type="SMR" id="A4SDF7"/>
<dbReference type="STRING" id="290318.Cvib_0494"/>
<dbReference type="KEGG" id="pvi:Cvib_0494"/>
<dbReference type="eggNOG" id="COG0854">
    <property type="taxonomic scope" value="Bacteria"/>
</dbReference>
<dbReference type="HOGENOM" id="CLU_074563_0_0_10"/>
<dbReference type="OrthoDB" id="9806590at2"/>
<dbReference type="UniPathway" id="UPA00244">
    <property type="reaction ID" value="UER00313"/>
</dbReference>
<dbReference type="GO" id="GO:0005829">
    <property type="term" value="C:cytosol"/>
    <property type="evidence" value="ECO:0007669"/>
    <property type="project" value="TreeGrafter"/>
</dbReference>
<dbReference type="GO" id="GO:0033856">
    <property type="term" value="F:pyridoxine 5'-phosphate synthase activity"/>
    <property type="evidence" value="ECO:0007669"/>
    <property type="project" value="UniProtKB-EC"/>
</dbReference>
<dbReference type="GO" id="GO:0008615">
    <property type="term" value="P:pyridoxine biosynthetic process"/>
    <property type="evidence" value="ECO:0007669"/>
    <property type="project" value="UniProtKB-UniRule"/>
</dbReference>
<dbReference type="CDD" id="cd00003">
    <property type="entry name" value="PNPsynthase"/>
    <property type="match status" value="1"/>
</dbReference>
<dbReference type="Gene3D" id="3.20.20.70">
    <property type="entry name" value="Aldolase class I"/>
    <property type="match status" value="1"/>
</dbReference>
<dbReference type="HAMAP" id="MF_00279">
    <property type="entry name" value="PdxJ"/>
    <property type="match status" value="1"/>
</dbReference>
<dbReference type="InterPro" id="IPR013785">
    <property type="entry name" value="Aldolase_TIM"/>
</dbReference>
<dbReference type="InterPro" id="IPR004569">
    <property type="entry name" value="PyrdxlP_synth_PdxJ"/>
</dbReference>
<dbReference type="InterPro" id="IPR036130">
    <property type="entry name" value="Pyridoxine-5'_phos_synth"/>
</dbReference>
<dbReference type="NCBIfam" id="TIGR00559">
    <property type="entry name" value="pdxJ"/>
    <property type="match status" value="1"/>
</dbReference>
<dbReference type="NCBIfam" id="NF003625">
    <property type="entry name" value="PRK05265.1-3"/>
    <property type="match status" value="1"/>
</dbReference>
<dbReference type="NCBIfam" id="NF003627">
    <property type="entry name" value="PRK05265.1-5"/>
    <property type="match status" value="1"/>
</dbReference>
<dbReference type="PANTHER" id="PTHR30456">
    <property type="entry name" value="PYRIDOXINE 5'-PHOSPHATE SYNTHASE"/>
    <property type="match status" value="1"/>
</dbReference>
<dbReference type="PANTHER" id="PTHR30456:SF0">
    <property type="entry name" value="PYRIDOXINE 5'-PHOSPHATE SYNTHASE"/>
    <property type="match status" value="1"/>
</dbReference>
<dbReference type="Pfam" id="PF03740">
    <property type="entry name" value="PdxJ"/>
    <property type="match status" value="1"/>
</dbReference>
<dbReference type="SUPFAM" id="SSF63892">
    <property type="entry name" value="Pyridoxine 5'-phosphate synthase"/>
    <property type="match status" value="1"/>
</dbReference>
<keyword id="KW-0963">Cytoplasm</keyword>
<keyword id="KW-0664">Pyridoxine biosynthesis</keyword>
<keyword id="KW-0808">Transferase</keyword>
<organism>
    <name type="scientific">Chlorobium phaeovibrioides (strain DSM 265 / 1930)</name>
    <name type="common">Prosthecochloris vibrioformis (strain DSM 265)</name>
    <dbReference type="NCBI Taxonomy" id="290318"/>
    <lineage>
        <taxon>Bacteria</taxon>
        <taxon>Pseudomonadati</taxon>
        <taxon>Chlorobiota</taxon>
        <taxon>Chlorobiia</taxon>
        <taxon>Chlorobiales</taxon>
        <taxon>Chlorobiaceae</taxon>
        <taxon>Chlorobium/Pelodictyon group</taxon>
        <taxon>Chlorobium</taxon>
    </lineage>
</organism>
<sequence length="235" mass="25805">MRLAVNIDHIATLRNARNEHNPDPVEAALLAEKSGAVGIVCHLREDRRHIRDHDLAALRKAVTTKLDLEMAMTDEMGAIAVATMPELITLVPEKREELTTEGGFAIERHFNRLVDFLEPIKGAGIEISLFIEAEQRAIDLAEKAGADLVELHTGAYALKTGEEQAIELKKIRQAAVYAKSLGLRVVAGHGLNYENIAPFRDIEEIEEVSIGHALIARAAFVGIPAAVREMLDIIN</sequence>
<evidence type="ECO:0000255" key="1">
    <source>
        <dbReference type="HAMAP-Rule" id="MF_00279"/>
    </source>
</evidence>
<gene>
    <name evidence="1" type="primary">pdxJ</name>
    <name type="ordered locus">Cvib_0494</name>
</gene>
<protein>
    <recommendedName>
        <fullName evidence="1">Pyridoxine 5'-phosphate synthase</fullName>
        <shortName evidence="1">PNP synthase</shortName>
        <ecNumber evidence="1">2.6.99.2</ecNumber>
    </recommendedName>
</protein>
<accession>A4SDF7</accession>